<reference key="1">
    <citation type="submission" date="2004-08" db="EMBL/GenBank/DDBJ databases">
        <authorList>
            <consortium name="NIH - Xenopus Gene Collection (XGC) project"/>
        </authorList>
    </citation>
    <scope>NUCLEOTIDE SEQUENCE [LARGE SCALE MRNA]</scope>
    <source>
        <tissue>Embryo</tissue>
    </source>
</reference>
<proteinExistence type="evidence at transcript level"/>
<protein>
    <recommendedName>
        <fullName>Proline-rich nuclear receptor coactivator 2</fullName>
    </recommendedName>
</protein>
<name>PNRC2_XENTR</name>
<gene>
    <name type="primary">pnrc2</name>
</gene>
<feature type="chain" id="PRO_0000377568" description="Proline-rich nuclear receptor coactivator 2">
    <location>
        <begin position="1"/>
        <end position="136"/>
    </location>
</feature>
<feature type="region of interest" description="Disordered" evidence="2">
    <location>
        <begin position="1"/>
        <end position="22"/>
    </location>
</feature>
<feature type="region of interest" description="Disordered" evidence="2">
    <location>
        <begin position="58"/>
        <end position="78"/>
    </location>
</feature>
<feature type="short sequence motif" description="SH3-binding">
    <location>
        <begin position="96"/>
        <end position="102"/>
    </location>
</feature>
<feature type="compositionally biased region" description="Polar residues" evidence="2">
    <location>
        <begin position="13"/>
        <end position="22"/>
    </location>
</feature>
<feature type="compositionally biased region" description="Low complexity" evidence="2">
    <location>
        <begin position="58"/>
        <end position="72"/>
    </location>
</feature>
<accession>Q68EQ8</accession>
<comment type="function">
    <text evidence="1">Involved in nonsense-mediated mRNA decay (NMD) by acting as a bridge between the mRNA decapping complex and the NMD machinery. May act by targeting the NMD machinery to the P-body and recruiting the decapping machinery to aberrant mRNAs. Required for upf1/rent1 localization to the P-body. Also acts as a nuclear receptor coactivator (By similarity).</text>
</comment>
<comment type="subcellular location">
    <subcellularLocation>
        <location evidence="1">Nucleus</location>
    </subcellularLocation>
    <subcellularLocation>
        <location evidence="1">Cytoplasm</location>
        <location evidence="1">P-body</location>
    </subcellularLocation>
</comment>
<comment type="similarity">
    <text evidence="3">Belongs to the PNRC family. PNRC2 subfamily.</text>
</comment>
<evidence type="ECO:0000250" key="1"/>
<evidence type="ECO:0000256" key="2">
    <source>
        <dbReference type="SAM" id="MobiDB-lite"/>
    </source>
</evidence>
<evidence type="ECO:0000305" key="3"/>
<dbReference type="EMBL" id="BC080143">
    <property type="protein sequence ID" value="AAH80143.1"/>
    <property type="molecule type" value="mRNA"/>
</dbReference>
<dbReference type="RefSeq" id="NP_001008433.1">
    <property type="nucleotide sequence ID" value="NM_001008433.1"/>
</dbReference>
<dbReference type="SMR" id="Q68EQ8"/>
<dbReference type="FunCoup" id="Q68EQ8">
    <property type="interactions" value="3148"/>
</dbReference>
<dbReference type="STRING" id="8364.ENSXETP00000034230"/>
<dbReference type="PaxDb" id="8364-ENSXETP00000011525"/>
<dbReference type="DNASU" id="493263"/>
<dbReference type="GeneID" id="493263"/>
<dbReference type="KEGG" id="xtr:493263"/>
<dbReference type="AGR" id="Xenbase:XB-GENE-490316"/>
<dbReference type="CTD" id="55629"/>
<dbReference type="Xenbase" id="XB-GENE-490316">
    <property type="gene designation" value="pnrc2"/>
</dbReference>
<dbReference type="eggNOG" id="ENOG502RZZX">
    <property type="taxonomic scope" value="Eukaryota"/>
</dbReference>
<dbReference type="HOGENOM" id="CLU_086541_1_0_1"/>
<dbReference type="InParanoid" id="Q68EQ8"/>
<dbReference type="OMA" id="QKTVMQN"/>
<dbReference type="OrthoDB" id="8732832at2759"/>
<dbReference type="PhylomeDB" id="Q68EQ8"/>
<dbReference type="Reactome" id="R-XTR-975957">
    <property type="pathway name" value="Nonsense Mediated Decay (NMD) enhanced by the Exon Junction Complex (EJC)"/>
</dbReference>
<dbReference type="Proteomes" id="UP000008143">
    <property type="component" value="Chromosome 2"/>
</dbReference>
<dbReference type="ExpressionAtlas" id="Q68EQ8">
    <property type="expression patterns" value="baseline"/>
</dbReference>
<dbReference type="GO" id="GO:0005634">
    <property type="term" value="C:nucleus"/>
    <property type="evidence" value="ECO:0000250"/>
    <property type="project" value="UniProtKB"/>
</dbReference>
<dbReference type="GO" id="GO:0000932">
    <property type="term" value="C:P-body"/>
    <property type="evidence" value="ECO:0000250"/>
    <property type="project" value="UniProtKB"/>
</dbReference>
<dbReference type="GO" id="GO:0000184">
    <property type="term" value="P:nuclear-transcribed mRNA catabolic process, nonsense-mediated decay"/>
    <property type="evidence" value="ECO:0000250"/>
    <property type="project" value="UniProtKB"/>
</dbReference>
<dbReference type="InterPro" id="IPR028322">
    <property type="entry name" value="PNRC-like_rgn"/>
</dbReference>
<dbReference type="InterPro" id="IPR026780">
    <property type="entry name" value="PNRC1/2"/>
</dbReference>
<dbReference type="PANTHER" id="PTHR15405">
    <property type="entry name" value="PROLINE-RICH NUCLEAR RECEPTOR COACTIVATOR"/>
    <property type="match status" value="1"/>
</dbReference>
<dbReference type="Pfam" id="PF15365">
    <property type="entry name" value="PNRC"/>
    <property type="match status" value="1"/>
</dbReference>
<organism>
    <name type="scientific">Xenopus tropicalis</name>
    <name type="common">Western clawed frog</name>
    <name type="synonym">Silurana tropicalis</name>
    <dbReference type="NCBI Taxonomy" id="8364"/>
    <lineage>
        <taxon>Eukaryota</taxon>
        <taxon>Metazoa</taxon>
        <taxon>Chordata</taxon>
        <taxon>Craniata</taxon>
        <taxon>Vertebrata</taxon>
        <taxon>Euteleostomi</taxon>
        <taxon>Amphibia</taxon>
        <taxon>Batrachia</taxon>
        <taxon>Anura</taxon>
        <taxon>Pipoidea</taxon>
        <taxon>Pipidae</taxon>
        <taxon>Xenopodinae</taxon>
        <taxon>Xenopus</taxon>
        <taxon>Silurana</taxon>
    </lineage>
</organism>
<keyword id="KW-0010">Activator</keyword>
<keyword id="KW-0963">Cytoplasm</keyword>
<keyword id="KW-0866">Nonsense-mediated mRNA decay</keyword>
<keyword id="KW-0539">Nucleus</keyword>
<keyword id="KW-1185">Reference proteome</keyword>
<keyword id="KW-0804">Transcription</keyword>
<keyword id="KW-0805">Transcription regulation</keyword>
<sequence>MGGGERFNIPGQHRNNLGKQINRQKLLERNNQKMNTSLSKDRVRGCGTSLAWQAMQNGVNNNNTRSSNQNWSAGFPASKNFFTDQDNQNYAGAKFSEPPSPSVLPKPPSHWVLLSCSPAEKELMSFQLKTLLKVQA</sequence>